<feature type="chain" id="PRO_0000194401" description="Adenosine deaminase">
    <location>
        <begin position="1"/>
        <end position="331"/>
    </location>
</feature>
<feature type="active site" description="Proton donor" evidence="1">
    <location>
        <position position="200"/>
    </location>
</feature>
<feature type="binding site" evidence="1">
    <location>
        <position position="12"/>
    </location>
    <ligand>
        <name>Zn(2+)</name>
        <dbReference type="ChEBI" id="CHEBI:29105"/>
        <note>catalytic</note>
    </ligand>
</feature>
<feature type="binding site" evidence="1">
    <location>
        <position position="14"/>
    </location>
    <ligand>
        <name>substrate</name>
    </ligand>
</feature>
<feature type="binding site" evidence="1">
    <location>
        <position position="14"/>
    </location>
    <ligand>
        <name>Zn(2+)</name>
        <dbReference type="ChEBI" id="CHEBI:29105"/>
        <note>catalytic</note>
    </ligand>
</feature>
<feature type="binding site" evidence="1">
    <location>
        <position position="16"/>
    </location>
    <ligand>
        <name>substrate</name>
    </ligand>
</feature>
<feature type="binding site" evidence="1">
    <location>
        <position position="170"/>
    </location>
    <ligand>
        <name>substrate</name>
    </ligand>
</feature>
<feature type="binding site" evidence="1">
    <location>
        <position position="197"/>
    </location>
    <ligand>
        <name>Zn(2+)</name>
        <dbReference type="ChEBI" id="CHEBI:29105"/>
        <note>catalytic</note>
    </ligand>
</feature>
<feature type="binding site" evidence="1">
    <location>
        <position position="278"/>
    </location>
    <ligand>
        <name>Zn(2+)</name>
        <dbReference type="ChEBI" id="CHEBI:29105"/>
        <note>catalytic</note>
    </ligand>
</feature>
<feature type="site" description="Important for catalytic activity" evidence="1">
    <location>
        <position position="221"/>
    </location>
</feature>
<keyword id="KW-0378">Hydrolase</keyword>
<keyword id="KW-0479">Metal-binding</keyword>
<keyword id="KW-0546">Nucleotide metabolism</keyword>
<keyword id="KW-0862">Zinc</keyword>
<dbReference type="EC" id="3.5.4.4" evidence="1"/>
<dbReference type="EMBL" id="BA000038">
    <property type="protein sequence ID" value="BAC97046.1"/>
    <property type="molecule type" value="Genomic_DNA"/>
</dbReference>
<dbReference type="RefSeq" id="WP_011152304.1">
    <property type="nucleotide sequence ID" value="NC_005140.1"/>
</dbReference>
<dbReference type="SMR" id="Q7MDL6"/>
<dbReference type="STRING" id="672.VV93_v1c39630"/>
<dbReference type="KEGG" id="vvy:VVA1020"/>
<dbReference type="PATRIC" id="fig|196600.6.peg.4189"/>
<dbReference type="eggNOG" id="COG1816">
    <property type="taxonomic scope" value="Bacteria"/>
</dbReference>
<dbReference type="HOGENOM" id="CLU_039228_0_0_6"/>
<dbReference type="Proteomes" id="UP000002675">
    <property type="component" value="Chromosome II"/>
</dbReference>
<dbReference type="GO" id="GO:0005829">
    <property type="term" value="C:cytosol"/>
    <property type="evidence" value="ECO:0007669"/>
    <property type="project" value="TreeGrafter"/>
</dbReference>
<dbReference type="GO" id="GO:0046936">
    <property type="term" value="F:2'-deoxyadenosine deaminase activity"/>
    <property type="evidence" value="ECO:0007669"/>
    <property type="project" value="RHEA"/>
</dbReference>
<dbReference type="GO" id="GO:0004000">
    <property type="term" value="F:adenosine deaminase activity"/>
    <property type="evidence" value="ECO:0007669"/>
    <property type="project" value="UniProtKB-UniRule"/>
</dbReference>
<dbReference type="GO" id="GO:0008270">
    <property type="term" value="F:zinc ion binding"/>
    <property type="evidence" value="ECO:0007669"/>
    <property type="project" value="UniProtKB-UniRule"/>
</dbReference>
<dbReference type="GO" id="GO:0006154">
    <property type="term" value="P:adenosine catabolic process"/>
    <property type="evidence" value="ECO:0007669"/>
    <property type="project" value="TreeGrafter"/>
</dbReference>
<dbReference type="GO" id="GO:0043103">
    <property type="term" value="P:hypoxanthine salvage"/>
    <property type="evidence" value="ECO:0007669"/>
    <property type="project" value="TreeGrafter"/>
</dbReference>
<dbReference type="GO" id="GO:0046103">
    <property type="term" value="P:inosine biosynthetic process"/>
    <property type="evidence" value="ECO:0007669"/>
    <property type="project" value="TreeGrafter"/>
</dbReference>
<dbReference type="GO" id="GO:0009117">
    <property type="term" value="P:nucleotide metabolic process"/>
    <property type="evidence" value="ECO:0007669"/>
    <property type="project" value="UniProtKB-KW"/>
</dbReference>
<dbReference type="GO" id="GO:0009168">
    <property type="term" value="P:purine ribonucleoside monophosphate biosynthetic process"/>
    <property type="evidence" value="ECO:0007669"/>
    <property type="project" value="UniProtKB-UniRule"/>
</dbReference>
<dbReference type="CDD" id="cd01320">
    <property type="entry name" value="ADA"/>
    <property type="match status" value="1"/>
</dbReference>
<dbReference type="Gene3D" id="3.20.20.140">
    <property type="entry name" value="Metal-dependent hydrolases"/>
    <property type="match status" value="1"/>
</dbReference>
<dbReference type="HAMAP" id="MF_00540">
    <property type="entry name" value="A_deaminase"/>
    <property type="match status" value="1"/>
</dbReference>
<dbReference type="InterPro" id="IPR028893">
    <property type="entry name" value="A_deaminase"/>
</dbReference>
<dbReference type="InterPro" id="IPR001365">
    <property type="entry name" value="A_deaminase_dom"/>
</dbReference>
<dbReference type="InterPro" id="IPR006330">
    <property type="entry name" value="Ado/ade_deaminase"/>
</dbReference>
<dbReference type="InterPro" id="IPR032466">
    <property type="entry name" value="Metal_Hydrolase"/>
</dbReference>
<dbReference type="NCBIfam" id="TIGR01430">
    <property type="entry name" value="aden_deam"/>
    <property type="match status" value="1"/>
</dbReference>
<dbReference type="PANTHER" id="PTHR11409">
    <property type="entry name" value="ADENOSINE DEAMINASE"/>
    <property type="match status" value="1"/>
</dbReference>
<dbReference type="PANTHER" id="PTHR11409:SF43">
    <property type="entry name" value="ADENOSINE DEAMINASE"/>
    <property type="match status" value="1"/>
</dbReference>
<dbReference type="Pfam" id="PF00962">
    <property type="entry name" value="A_deaminase"/>
    <property type="match status" value="1"/>
</dbReference>
<dbReference type="SUPFAM" id="SSF51556">
    <property type="entry name" value="Metallo-dependent hydrolases"/>
    <property type="match status" value="1"/>
</dbReference>
<comment type="function">
    <text evidence="1">Catalyzes the hydrolytic deamination of adenosine and 2-deoxyadenosine.</text>
</comment>
<comment type="catalytic activity">
    <reaction evidence="1">
        <text>adenosine + H2O + H(+) = inosine + NH4(+)</text>
        <dbReference type="Rhea" id="RHEA:24408"/>
        <dbReference type="ChEBI" id="CHEBI:15377"/>
        <dbReference type="ChEBI" id="CHEBI:15378"/>
        <dbReference type="ChEBI" id="CHEBI:16335"/>
        <dbReference type="ChEBI" id="CHEBI:17596"/>
        <dbReference type="ChEBI" id="CHEBI:28938"/>
        <dbReference type="EC" id="3.5.4.4"/>
    </reaction>
    <physiologicalReaction direction="left-to-right" evidence="1">
        <dbReference type="Rhea" id="RHEA:24409"/>
    </physiologicalReaction>
</comment>
<comment type="catalytic activity">
    <reaction evidence="1">
        <text>2'-deoxyadenosine + H2O + H(+) = 2'-deoxyinosine + NH4(+)</text>
        <dbReference type="Rhea" id="RHEA:28190"/>
        <dbReference type="ChEBI" id="CHEBI:15377"/>
        <dbReference type="ChEBI" id="CHEBI:15378"/>
        <dbReference type="ChEBI" id="CHEBI:17256"/>
        <dbReference type="ChEBI" id="CHEBI:28938"/>
        <dbReference type="ChEBI" id="CHEBI:28997"/>
        <dbReference type="EC" id="3.5.4.4"/>
    </reaction>
    <physiologicalReaction direction="left-to-right" evidence="1">
        <dbReference type="Rhea" id="RHEA:28191"/>
    </physiologicalReaction>
</comment>
<comment type="cofactor">
    <cofactor evidence="1">
        <name>Zn(2+)</name>
        <dbReference type="ChEBI" id="CHEBI:29105"/>
    </cofactor>
    <text evidence="1">Binds 1 zinc ion per subunit.</text>
</comment>
<comment type="similarity">
    <text evidence="1">Belongs to the metallo-dependent hydrolases superfamily. Adenosine and AMP deaminases family. Adenosine deaminase subfamily.</text>
</comment>
<gene>
    <name evidence="1" type="primary">add</name>
    <name type="ordered locus">VVA1020</name>
</gene>
<accession>Q7MDL6</accession>
<sequence length="331" mass="36997">MNYFDLPKIDLHCHLDGSVRPQTIIDLADEQNLTLPSRDINVIKEMMVAPETCPNLDEYLKRFELPGMVMQTAEALERISFELFEDAANENVKYLEVRFGPLLHQVKGLSLDDIMDSVVRGMKRAEAQYDIHGNYILSILRTMPKDQIKAVLEAGAKHLNDGIVAFDLAGSEIPGFCHEFVPYAQYAKELGYRITIHAGEQGAGQNVYDAISLLGAERVGHGIFIHNHPEAYQLVKGEEVALETCPSSNVQTKAVNSLSEHPIKAFYKDGIAVTINTDNRTVSNTTMTDEVRKVVEAFELTEAEYFDIYTISVNNAFTSDAVKQHLLSFAQ</sequence>
<evidence type="ECO:0000255" key="1">
    <source>
        <dbReference type="HAMAP-Rule" id="MF_00540"/>
    </source>
</evidence>
<reference key="1">
    <citation type="journal article" date="2003" name="Genome Res.">
        <title>Comparative genome analysis of Vibrio vulnificus, a marine pathogen.</title>
        <authorList>
            <person name="Chen C.-Y."/>
            <person name="Wu K.-M."/>
            <person name="Chang Y.-C."/>
            <person name="Chang C.-H."/>
            <person name="Tsai H.-C."/>
            <person name="Liao T.-L."/>
            <person name="Liu Y.-M."/>
            <person name="Chen H.-J."/>
            <person name="Shen A.B.-T."/>
            <person name="Li J.-C."/>
            <person name="Su T.-L."/>
            <person name="Shao C.-P."/>
            <person name="Lee C.-T."/>
            <person name="Hor L.-I."/>
            <person name="Tsai S.-F."/>
        </authorList>
    </citation>
    <scope>NUCLEOTIDE SEQUENCE [LARGE SCALE GENOMIC DNA]</scope>
    <source>
        <strain>YJ016</strain>
    </source>
</reference>
<protein>
    <recommendedName>
        <fullName evidence="1">Adenosine deaminase</fullName>
        <ecNumber evidence="1">3.5.4.4</ecNumber>
    </recommendedName>
    <alternativeName>
        <fullName evidence="1">Adenosine aminohydrolase</fullName>
    </alternativeName>
</protein>
<proteinExistence type="inferred from homology"/>
<organism>
    <name type="scientific">Vibrio vulnificus (strain YJ016)</name>
    <dbReference type="NCBI Taxonomy" id="196600"/>
    <lineage>
        <taxon>Bacteria</taxon>
        <taxon>Pseudomonadati</taxon>
        <taxon>Pseudomonadota</taxon>
        <taxon>Gammaproteobacteria</taxon>
        <taxon>Vibrionales</taxon>
        <taxon>Vibrionaceae</taxon>
        <taxon>Vibrio</taxon>
    </lineage>
</organism>
<name>ADD_VIBVY</name>